<evidence type="ECO:0000255" key="1">
    <source>
        <dbReference type="HAMAP-Rule" id="MF_01390"/>
    </source>
</evidence>
<proteinExistence type="inferred from homology"/>
<geneLocation type="chloroplast"/>
<dbReference type="EMBL" id="AB078106">
    <property type="protein sequence ID" value="BAC54858.1"/>
    <property type="molecule type" value="Genomic_DNA"/>
</dbReference>
<dbReference type="GO" id="GO:0009507">
    <property type="term" value="C:chloroplast"/>
    <property type="evidence" value="ECO:0007669"/>
    <property type="project" value="UniProtKB-SubCell"/>
</dbReference>
<dbReference type="GO" id="GO:0003723">
    <property type="term" value="F:RNA binding"/>
    <property type="evidence" value="ECO:0007669"/>
    <property type="project" value="UniProtKB-KW"/>
</dbReference>
<dbReference type="GO" id="GO:0006397">
    <property type="term" value="P:mRNA processing"/>
    <property type="evidence" value="ECO:0007669"/>
    <property type="project" value="UniProtKB-KW"/>
</dbReference>
<dbReference type="GO" id="GO:0008380">
    <property type="term" value="P:RNA splicing"/>
    <property type="evidence" value="ECO:0007669"/>
    <property type="project" value="UniProtKB-UniRule"/>
</dbReference>
<dbReference type="GO" id="GO:0008033">
    <property type="term" value="P:tRNA processing"/>
    <property type="evidence" value="ECO:0007669"/>
    <property type="project" value="UniProtKB-KW"/>
</dbReference>
<dbReference type="HAMAP" id="MF_01390">
    <property type="entry name" value="MatK"/>
    <property type="match status" value="1"/>
</dbReference>
<dbReference type="InterPro" id="IPR024937">
    <property type="entry name" value="Domain_X"/>
</dbReference>
<dbReference type="InterPro" id="IPR002866">
    <property type="entry name" value="Maturase_MatK"/>
</dbReference>
<dbReference type="InterPro" id="IPR024942">
    <property type="entry name" value="Maturase_MatK_N"/>
</dbReference>
<dbReference type="PANTHER" id="PTHR34811">
    <property type="entry name" value="MATURASE K"/>
    <property type="match status" value="1"/>
</dbReference>
<dbReference type="PANTHER" id="PTHR34811:SF1">
    <property type="entry name" value="MATURASE K"/>
    <property type="match status" value="1"/>
</dbReference>
<dbReference type="Pfam" id="PF01348">
    <property type="entry name" value="Intron_maturas2"/>
    <property type="match status" value="1"/>
</dbReference>
<dbReference type="Pfam" id="PF01824">
    <property type="entry name" value="MatK_N"/>
    <property type="match status" value="1"/>
</dbReference>
<feature type="chain" id="PRO_0000143420" description="Maturase K">
    <location>
        <begin position="1"/>
        <end position="511"/>
    </location>
</feature>
<protein>
    <recommendedName>
        <fullName evidence="1">Maturase K</fullName>
    </recommendedName>
    <alternativeName>
        <fullName evidence="1">Intron maturase</fullName>
    </alternativeName>
</protein>
<name>MATK_HORJU</name>
<sequence>MEKFEGYSEKHKSRQQYFVYPLLFQEYIYAFAHDYGLNGSEPVEIVSCNNKKFSSLLVKRLIIRMYQQNFLDNSVNNPNQDRLLDYKNYFYSEFYSQILSEGFAIVVEIPFSLRELSCPKEKEIPKFQNLRSIHSIFPFLEDKFLHLDYLSHIEIPYPIHLEILVQLLQYRIQDVPSLHLLRFFLNYYSNWNSFITSMKSIFYFQKENKRLFKFLYNSYVSEYEFFLLFLRKQSSCLPLASSGTFLERIHFSRKMEHFGIMYPGFSRKTLWFFMDPLMHYVRYQGKAILASKGSFFLKKKWKCYLINFWQYYFFFWTQPRRIHINQLANSCFDFMGYLSSVPKSPLLVRNQMLENSFLIDTRMKKFDTIVPATLLIGYLSKAQFCTGSGHPISKPIWTDLSDWDILDRFGRICRNLFHYHSGSSKKRTLYRLKYILRLSCARTLARKHKSTVRTFMQRLGSAFLEEFFTEEEQVFSLMFTKTTLFSFCGSHTERIWYLDIIRINDLVNPLN</sequence>
<keyword id="KW-0150">Chloroplast</keyword>
<keyword id="KW-0507">mRNA processing</keyword>
<keyword id="KW-0934">Plastid</keyword>
<keyword id="KW-0694">RNA-binding</keyword>
<keyword id="KW-0819">tRNA processing</keyword>
<gene>
    <name evidence="1" type="primary">matK</name>
</gene>
<comment type="function">
    <text evidence="1">Usually encoded in the trnK tRNA gene intron. Probably assists in splicing its own and other chloroplast group II introns.</text>
</comment>
<comment type="subcellular location">
    <subcellularLocation>
        <location>Plastid</location>
        <location>Chloroplast</location>
    </subcellularLocation>
</comment>
<comment type="similarity">
    <text evidence="1">Belongs to the intron maturase 2 family. MatK subfamily.</text>
</comment>
<accession>Q85ZU5</accession>
<organism>
    <name type="scientific">Hordeum jubatum</name>
    <name type="common">Foxtail barley</name>
    <name type="synonym">Critesion jubatum</name>
    <dbReference type="NCBI Taxonomy" id="4517"/>
    <lineage>
        <taxon>Eukaryota</taxon>
        <taxon>Viridiplantae</taxon>
        <taxon>Streptophyta</taxon>
        <taxon>Embryophyta</taxon>
        <taxon>Tracheophyta</taxon>
        <taxon>Spermatophyta</taxon>
        <taxon>Magnoliopsida</taxon>
        <taxon>Liliopsida</taxon>
        <taxon>Poales</taxon>
        <taxon>Poaceae</taxon>
        <taxon>BOP clade</taxon>
        <taxon>Pooideae</taxon>
        <taxon>Triticodae</taxon>
        <taxon>Triticeae</taxon>
        <taxon>Hordeinae</taxon>
        <taxon>Hordeum</taxon>
    </lineage>
</organism>
<reference key="1">
    <citation type="journal article" date="2002" name="Genome">
        <title>Molecular phylogeny of the genus Hordeum using three chloroplast DNA sequences.</title>
        <authorList>
            <person name="Nishikawa T."/>
            <person name="Salomon B."/>
            <person name="Komatsuda T."/>
            <person name="von Bothmer R."/>
            <person name="Kadowaki K."/>
        </authorList>
    </citation>
    <scope>NUCLEOTIDE SEQUENCE [GENOMIC DNA]</scope>
    <source>
        <strain>H2018</strain>
    </source>
</reference>